<reference key="1">
    <citation type="journal article" date="2002" name="Nature">
        <title>The genome sequence of Schizosaccharomyces pombe.</title>
        <authorList>
            <person name="Wood V."/>
            <person name="Gwilliam R."/>
            <person name="Rajandream M.A."/>
            <person name="Lyne M.H."/>
            <person name="Lyne R."/>
            <person name="Stewart A."/>
            <person name="Sgouros J.G."/>
            <person name="Peat N."/>
            <person name="Hayles J."/>
            <person name="Baker S.G."/>
            <person name="Basham D."/>
            <person name="Bowman S."/>
            <person name="Brooks K."/>
            <person name="Brown D."/>
            <person name="Brown S."/>
            <person name="Chillingworth T."/>
            <person name="Churcher C.M."/>
            <person name="Collins M."/>
            <person name="Connor R."/>
            <person name="Cronin A."/>
            <person name="Davis P."/>
            <person name="Feltwell T."/>
            <person name="Fraser A."/>
            <person name="Gentles S."/>
            <person name="Goble A."/>
            <person name="Hamlin N."/>
            <person name="Harris D.E."/>
            <person name="Hidalgo J."/>
            <person name="Hodgson G."/>
            <person name="Holroyd S."/>
            <person name="Hornsby T."/>
            <person name="Howarth S."/>
            <person name="Huckle E.J."/>
            <person name="Hunt S."/>
            <person name="Jagels K."/>
            <person name="James K.D."/>
            <person name="Jones L."/>
            <person name="Jones M."/>
            <person name="Leather S."/>
            <person name="McDonald S."/>
            <person name="McLean J."/>
            <person name="Mooney P."/>
            <person name="Moule S."/>
            <person name="Mungall K.L."/>
            <person name="Murphy L.D."/>
            <person name="Niblett D."/>
            <person name="Odell C."/>
            <person name="Oliver K."/>
            <person name="O'Neil S."/>
            <person name="Pearson D."/>
            <person name="Quail M.A."/>
            <person name="Rabbinowitsch E."/>
            <person name="Rutherford K.M."/>
            <person name="Rutter S."/>
            <person name="Saunders D."/>
            <person name="Seeger K."/>
            <person name="Sharp S."/>
            <person name="Skelton J."/>
            <person name="Simmonds M.N."/>
            <person name="Squares R."/>
            <person name="Squares S."/>
            <person name="Stevens K."/>
            <person name="Taylor K."/>
            <person name="Taylor R.G."/>
            <person name="Tivey A."/>
            <person name="Walsh S.V."/>
            <person name="Warren T."/>
            <person name="Whitehead S."/>
            <person name="Woodward J.R."/>
            <person name="Volckaert G."/>
            <person name="Aert R."/>
            <person name="Robben J."/>
            <person name="Grymonprez B."/>
            <person name="Weltjens I."/>
            <person name="Vanstreels E."/>
            <person name="Rieger M."/>
            <person name="Schaefer M."/>
            <person name="Mueller-Auer S."/>
            <person name="Gabel C."/>
            <person name="Fuchs M."/>
            <person name="Duesterhoeft A."/>
            <person name="Fritzc C."/>
            <person name="Holzer E."/>
            <person name="Moestl D."/>
            <person name="Hilbert H."/>
            <person name="Borzym K."/>
            <person name="Langer I."/>
            <person name="Beck A."/>
            <person name="Lehrach H."/>
            <person name="Reinhardt R."/>
            <person name="Pohl T.M."/>
            <person name="Eger P."/>
            <person name="Zimmermann W."/>
            <person name="Wedler H."/>
            <person name="Wambutt R."/>
            <person name="Purnelle B."/>
            <person name="Goffeau A."/>
            <person name="Cadieu E."/>
            <person name="Dreano S."/>
            <person name="Gloux S."/>
            <person name="Lelaure V."/>
            <person name="Mottier S."/>
            <person name="Galibert F."/>
            <person name="Aves S.J."/>
            <person name="Xiang Z."/>
            <person name="Hunt C."/>
            <person name="Moore K."/>
            <person name="Hurst S.M."/>
            <person name="Lucas M."/>
            <person name="Rochet M."/>
            <person name="Gaillardin C."/>
            <person name="Tallada V.A."/>
            <person name="Garzon A."/>
            <person name="Thode G."/>
            <person name="Daga R.R."/>
            <person name="Cruzado L."/>
            <person name="Jimenez J."/>
            <person name="Sanchez M."/>
            <person name="del Rey F."/>
            <person name="Benito J."/>
            <person name="Dominguez A."/>
            <person name="Revuelta J.L."/>
            <person name="Moreno S."/>
            <person name="Armstrong J."/>
            <person name="Forsburg S.L."/>
            <person name="Cerutti L."/>
            <person name="Lowe T."/>
            <person name="McCombie W.R."/>
            <person name="Paulsen I."/>
            <person name="Potashkin J."/>
            <person name="Shpakovski G.V."/>
            <person name="Ussery D."/>
            <person name="Barrell B.G."/>
            <person name="Nurse P."/>
        </authorList>
    </citation>
    <scope>NUCLEOTIDE SEQUENCE [LARGE SCALE GENOMIC DNA]</scope>
    <source>
        <strain>972 / ATCC 24843</strain>
    </source>
</reference>
<reference key="2">
    <citation type="journal article" date="2006" name="Nat. Biotechnol.">
        <title>ORFeome cloning and global analysis of protein localization in the fission yeast Schizosaccharomyces pombe.</title>
        <authorList>
            <person name="Matsuyama A."/>
            <person name="Arai R."/>
            <person name="Yashiroda Y."/>
            <person name="Shirai A."/>
            <person name="Kamata A."/>
            <person name="Sekido S."/>
            <person name="Kobayashi Y."/>
            <person name="Hashimoto A."/>
            <person name="Hamamoto M."/>
            <person name="Hiraoka Y."/>
            <person name="Horinouchi S."/>
            <person name="Yoshida M."/>
        </authorList>
    </citation>
    <scope>SUBCELLULAR LOCATION [LARGE SCALE ANALYSIS]</scope>
</reference>
<protein>
    <recommendedName>
        <fullName>Signal peptidase complex catalytic subunit sec11</fullName>
        <ecNumber evidence="1">3.4.21.89</ecNumber>
    </recommendedName>
</protein>
<accession>O74323</accession>
<evidence type="ECO:0000250" key="1">
    <source>
        <dbReference type="UniProtKB" id="P15367"/>
    </source>
</evidence>
<evidence type="ECO:0000250" key="2">
    <source>
        <dbReference type="UniProtKB" id="P67812"/>
    </source>
</evidence>
<evidence type="ECO:0000255" key="3"/>
<evidence type="ECO:0000305" key="4"/>
<gene>
    <name type="primary">sec11</name>
    <name type="ORF">SPBC1685.03</name>
</gene>
<dbReference type="EC" id="3.4.21.89" evidence="1"/>
<dbReference type="EMBL" id="CU329671">
    <property type="protein sequence ID" value="CAA20051.1"/>
    <property type="molecule type" value="Genomic_DNA"/>
</dbReference>
<dbReference type="PIR" id="T39519">
    <property type="entry name" value="T39519"/>
</dbReference>
<dbReference type="RefSeq" id="NP_595207.1">
    <property type="nucleotide sequence ID" value="NM_001021113.2"/>
</dbReference>
<dbReference type="SMR" id="O74323"/>
<dbReference type="BioGRID" id="276209">
    <property type="interactions" value="3"/>
</dbReference>
<dbReference type="FunCoup" id="O74323">
    <property type="interactions" value="324"/>
</dbReference>
<dbReference type="STRING" id="284812.O74323"/>
<dbReference type="MEROPS" id="S26.010"/>
<dbReference type="GlyCosmos" id="O74323">
    <property type="glycosylation" value="1 site, No reported glycans"/>
</dbReference>
<dbReference type="iPTMnet" id="O74323"/>
<dbReference type="PaxDb" id="4896-SPBC1685.03.1"/>
<dbReference type="EnsemblFungi" id="SPBC1685.03.1">
    <property type="protein sequence ID" value="SPBC1685.03.1:pep"/>
    <property type="gene ID" value="SPBC1685.03"/>
</dbReference>
<dbReference type="GeneID" id="2539654"/>
<dbReference type="KEGG" id="spo:2539654"/>
<dbReference type="PomBase" id="SPBC1685.03">
    <property type="gene designation" value="sec11"/>
</dbReference>
<dbReference type="VEuPathDB" id="FungiDB:SPBC1685.03"/>
<dbReference type="eggNOG" id="KOG3342">
    <property type="taxonomic scope" value="Eukaryota"/>
</dbReference>
<dbReference type="HOGENOM" id="CLU_089996_0_0_1"/>
<dbReference type="InParanoid" id="O74323"/>
<dbReference type="OMA" id="ILMNEYP"/>
<dbReference type="PhylomeDB" id="O74323"/>
<dbReference type="PRO" id="PR:O74323"/>
<dbReference type="Proteomes" id="UP000002485">
    <property type="component" value="Chromosome II"/>
</dbReference>
<dbReference type="GO" id="GO:0005783">
    <property type="term" value="C:endoplasmic reticulum"/>
    <property type="evidence" value="ECO:0007005"/>
    <property type="project" value="PomBase"/>
</dbReference>
<dbReference type="GO" id="GO:0005787">
    <property type="term" value="C:signal peptidase complex"/>
    <property type="evidence" value="ECO:0000318"/>
    <property type="project" value="GO_Central"/>
</dbReference>
<dbReference type="GO" id="GO:0008233">
    <property type="term" value="F:peptidase activity"/>
    <property type="evidence" value="ECO:0000318"/>
    <property type="project" value="GO_Central"/>
</dbReference>
<dbReference type="GO" id="GO:0004252">
    <property type="term" value="F:serine-type endopeptidase activity"/>
    <property type="evidence" value="ECO:0007669"/>
    <property type="project" value="UniProtKB-EC"/>
</dbReference>
<dbReference type="GO" id="GO:0006465">
    <property type="term" value="P:signal peptide processing"/>
    <property type="evidence" value="ECO:0000318"/>
    <property type="project" value="GO_Central"/>
</dbReference>
<dbReference type="CDD" id="cd06530">
    <property type="entry name" value="S26_SPase_I"/>
    <property type="match status" value="1"/>
</dbReference>
<dbReference type="FunFam" id="2.10.109.10:FF:000047">
    <property type="entry name" value="Peptidase S26B, signal peptidase"/>
    <property type="match status" value="1"/>
</dbReference>
<dbReference type="Gene3D" id="2.10.109.10">
    <property type="entry name" value="Umud Fragment, subunit A"/>
    <property type="match status" value="1"/>
</dbReference>
<dbReference type="InterPro" id="IPR036286">
    <property type="entry name" value="LexA/Signal_pep-like_sf"/>
</dbReference>
<dbReference type="InterPro" id="IPR019533">
    <property type="entry name" value="Peptidase_S26"/>
</dbReference>
<dbReference type="InterPro" id="IPR001733">
    <property type="entry name" value="Peptidase_S26B"/>
</dbReference>
<dbReference type="NCBIfam" id="TIGR02228">
    <property type="entry name" value="sigpep_I_arch"/>
    <property type="match status" value="1"/>
</dbReference>
<dbReference type="PANTHER" id="PTHR10806">
    <property type="entry name" value="SIGNAL PEPTIDASE COMPLEX CATALYTIC SUBUNIT SEC11"/>
    <property type="match status" value="1"/>
</dbReference>
<dbReference type="PANTHER" id="PTHR10806:SF6">
    <property type="entry name" value="SIGNAL PEPTIDASE COMPLEX CATALYTIC SUBUNIT SEC11"/>
    <property type="match status" value="1"/>
</dbReference>
<dbReference type="PRINTS" id="PR00728">
    <property type="entry name" value="SIGNALPTASE"/>
</dbReference>
<dbReference type="SUPFAM" id="SSF51306">
    <property type="entry name" value="LexA/Signal peptidase"/>
    <property type="match status" value="1"/>
</dbReference>
<organism>
    <name type="scientific">Schizosaccharomyces pombe (strain 972 / ATCC 24843)</name>
    <name type="common">Fission yeast</name>
    <dbReference type="NCBI Taxonomy" id="284812"/>
    <lineage>
        <taxon>Eukaryota</taxon>
        <taxon>Fungi</taxon>
        <taxon>Dikarya</taxon>
        <taxon>Ascomycota</taxon>
        <taxon>Taphrinomycotina</taxon>
        <taxon>Schizosaccharomycetes</taxon>
        <taxon>Schizosaccharomycetales</taxon>
        <taxon>Schizosaccharomycetaceae</taxon>
        <taxon>Schizosaccharomyces</taxon>
    </lineage>
</organism>
<feature type="chain" id="PRO_0000314115" description="Signal peptidase complex catalytic subunit sec11">
    <location>
        <begin position="1"/>
        <end position="189"/>
    </location>
</feature>
<feature type="topological domain" description="Cytoplasmic" evidence="3">
    <location>
        <begin position="1"/>
        <end position="8"/>
    </location>
</feature>
<feature type="transmembrane region" description="Helical; Signal-anchor for type II membrane protein" evidence="3">
    <location>
        <begin position="9"/>
        <end position="25"/>
    </location>
</feature>
<feature type="topological domain" description="Lumenal" evidence="3">
    <location>
        <begin position="26"/>
        <end position="189"/>
    </location>
</feature>
<feature type="region of interest" description="C-terminal short (CTS) helix" evidence="2">
    <location>
        <begin position="173"/>
        <end position="184"/>
    </location>
</feature>
<feature type="active site" description="Charge relay system" evidence="1">
    <location>
        <position position="47"/>
    </location>
</feature>
<feature type="active site" description="Charge relay system" evidence="1">
    <location>
        <position position="104"/>
    </location>
</feature>
<feature type="active site" description="Charge relay system" evidence="1">
    <location>
        <position position="129"/>
    </location>
</feature>
<feature type="glycosylation site" description="N-linked (GlcNAc...) asparagine" evidence="3">
    <location>
        <position position="114"/>
    </location>
</feature>
<sequence>MQKLSFRQGLAQILNLLLVLSSAYMGYKTLSFVTDCESPVVVVLSESMEPSFQRGDLLFLDNRNPSFDEAKVPSVFEKIIYGSPVGIGDIVVYSLPDRPIPIVHRVVKLYESENQTHLITKGDNNKIDDVAMFPKSINYLDRENHILGVVRGYFPYLGMITIWLTDYPILKYIMLGGLGLLTLIQKEEQ</sequence>
<name>SEC11_SCHPO</name>
<proteinExistence type="inferred from homology"/>
<comment type="function">
    <text evidence="1 2">Catalytic component of the signal peptidase complex (SPC) which catalyzes the cleavage of N-terminal signal sequences from nascent proteins as they are translocated into the lumen of the endoplasmic reticulum (By similarity). Specifically cleaves N-terminal signal peptides that contain a hydrophobic alpha-helix (h-region) shorter than 18-20 amino acids (By similarity).</text>
</comment>
<comment type="catalytic activity">
    <reaction evidence="1">
        <text>Cleavage of hydrophobic, N-terminal signal or leader sequences from secreted and periplasmic proteins.</text>
        <dbReference type="EC" id="3.4.21.89"/>
    </reaction>
</comment>
<comment type="subunit">
    <text evidence="1 2">Component of the signal peptidase complex (SPC) composed of a catalytic subunit sec11 and three accessory subunits spc1, spc2 and spc3 (By similarity). The complex induces a local thinning of the ER membrane which is used to measure the length of the signal peptide (SP) h-region of protein substrates. This ensures the selectivity of the complex towards h-regions shorter than 18-20 amino acids (By similarity). SPC associates with the translocon complex (By similarity).</text>
</comment>
<comment type="subcellular location">
    <subcellularLocation>
        <location evidence="1">Endoplasmic reticulum membrane</location>
        <topology evidence="1">Single-pass type II membrane protein</topology>
    </subcellularLocation>
</comment>
<comment type="domain">
    <text evidence="2">The C-terminal short (CTS) helix is essential for catalytic activity. It may be accommodated as a transmembrane helix in the thinned membrane environment of the complex, similarly to the signal peptide in the complex substrates.</text>
</comment>
<comment type="similarity">
    <text evidence="4">Belongs to the peptidase S26B family.</text>
</comment>
<keyword id="KW-0256">Endoplasmic reticulum</keyword>
<keyword id="KW-0325">Glycoprotein</keyword>
<keyword id="KW-0378">Hydrolase</keyword>
<keyword id="KW-0472">Membrane</keyword>
<keyword id="KW-0645">Protease</keyword>
<keyword id="KW-1185">Reference proteome</keyword>
<keyword id="KW-0735">Signal-anchor</keyword>
<keyword id="KW-0812">Transmembrane</keyword>
<keyword id="KW-1133">Transmembrane helix</keyword>